<keyword id="KW-0520">NAD</keyword>
<keyword id="KW-0560">Oxidoreductase</keyword>
<comment type="function">
    <text evidence="1">Involved in the oxidation of myo-inositol (MI) to 2-keto-myo-inositol (2KMI or 2-inosose).</text>
</comment>
<comment type="catalytic activity">
    <reaction evidence="1">
        <text>myo-inositol + NAD(+) = scyllo-inosose + NADH + H(+)</text>
        <dbReference type="Rhea" id="RHEA:16949"/>
        <dbReference type="ChEBI" id="CHEBI:15378"/>
        <dbReference type="ChEBI" id="CHEBI:17268"/>
        <dbReference type="ChEBI" id="CHEBI:17811"/>
        <dbReference type="ChEBI" id="CHEBI:57540"/>
        <dbReference type="ChEBI" id="CHEBI:57945"/>
        <dbReference type="EC" id="1.1.1.18"/>
    </reaction>
</comment>
<comment type="subunit">
    <text evidence="1">Homotetramer.</text>
</comment>
<comment type="similarity">
    <text evidence="1">Belongs to the Gfo/Idh/MocA family.</text>
</comment>
<comment type="sequence caution" evidence="2">
    <conflict type="erroneous initiation">
        <sequence resource="EMBL-CDS" id="AAZ36345"/>
    </conflict>
</comment>
<accession>Q48GY3</accession>
<protein>
    <recommendedName>
        <fullName evidence="1">Inositol 2-dehydrogenase</fullName>
        <ecNumber evidence="1">1.1.1.18</ecNumber>
    </recommendedName>
    <alternativeName>
        <fullName evidence="1">Myo-inositol 2-dehydrogenase</fullName>
        <shortName evidence="1">MI 2-dehydrogenase</shortName>
    </alternativeName>
</protein>
<name>IOLG_PSE14</name>
<feature type="chain" id="PRO_0000352581" description="Inositol 2-dehydrogenase">
    <location>
        <begin position="1"/>
        <end position="336"/>
    </location>
</feature>
<organism>
    <name type="scientific">Pseudomonas savastanoi pv. phaseolicola (strain 1448A / Race 6)</name>
    <name type="common">Pseudomonas syringae pv. phaseolicola (strain 1448A / Race 6)</name>
    <dbReference type="NCBI Taxonomy" id="264730"/>
    <lineage>
        <taxon>Bacteria</taxon>
        <taxon>Pseudomonadati</taxon>
        <taxon>Pseudomonadota</taxon>
        <taxon>Gammaproteobacteria</taxon>
        <taxon>Pseudomonadales</taxon>
        <taxon>Pseudomonadaceae</taxon>
        <taxon>Pseudomonas</taxon>
    </lineage>
</organism>
<gene>
    <name evidence="1" type="primary">iolG</name>
    <name type="ordered locus">PSPPH_3188</name>
</gene>
<dbReference type="EC" id="1.1.1.18" evidence="1"/>
<dbReference type="EMBL" id="CP000058">
    <property type="protein sequence ID" value="AAZ36345.1"/>
    <property type="status" value="ALT_INIT"/>
    <property type="molecule type" value="Genomic_DNA"/>
</dbReference>
<dbReference type="RefSeq" id="WP_002554084.1">
    <property type="nucleotide sequence ID" value="NC_005773.3"/>
</dbReference>
<dbReference type="SMR" id="Q48GY3"/>
<dbReference type="KEGG" id="psp:PSPPH_3188"/>
<dbReference type="eggNOG" id="COG0673">
    <property type="taxonomic scope" value="Bacteria"/>
</dbReference>
<dbReference type="HOGENOM" id="CLU_023194_0_1_6"/>
<dbReference type="Proteomes" id="UP000000551">
    <property type="component" value="Chromosome"/>
</dbReference>
<dbReference type="GO" id="GO:0050112">
    <property type="term" value="F:inositol 2-dehydrogenase (NAD+) activity"/>
    <property type="evidence" value="ECO:0007669"/>
    <property type="project" value="UniProtKB-UniRule"/>
</dbReference>
<dbReference type="GO" id="GO:0000166">
    <property type="term" value="F:nucleotide binding"/>
    <property type="evidence" value="ECO:0007669"/>
    <property type="project" value="InterPro"/>
</dbReference>
<dbReference type="GO" id="GO:0019310">
    <property type="term" value="P:inositol catabolic process"/>
    <property type="evidence" value="ECO:0007669"/>
    <property type="project" value="UniProtKB-UniRule"/>
</dbReference>
<dbReference type="Gene3D" id="3.30.360.10">
    <property type="entry name" value="Dihydrodipicolinate Reductase, domain 2"/>
    <property type="match status" value="1"/>
</dbReference>
<dbReference type="Gene3D" id="3.40.50.720">
    <property type="entry name" value="NAD(P)-binding Rossmann-like Domain"/>
    <property type="match status" value="1"/>
</dbReference>
<dbReference type="HAMAP" id="MF_01671">
    <property type="entry name" value="IolG"/>
    <property type="match status" value="1"/>
</dbReference>
<dbReference type="InterPro" id="IPR050424">
    <property type="entry name" value="Gfo-Idh-MocA_inositol_DH"/>
</dbReference>
<dbReference type="InterPro" id="IPR004104">
    <property type="entry name" value="Gfo/Idh/MocA-like_OxRdtase_C"/>
</dbReference>
<dbReference type="InterPro" id="IPR000683">
    <property type="entry name" value="Gfo/Idh/MocA-like_OxRdtase_N"/>
</dbReference>
<dbReference type="InterPro" id="IPR023794">
    <property type="entry name" value="MI/DCI_dehydrogenase"/>
</dbReference>
<dbReference type="InterPro" id="IPR036291">
    <property type="entry name" value="NAD(P)-bd_dom_sf"/>
</dbReference>
<dbReference type="PANTHER" id="PTHR43593">
    <property type="match status" value="1"/>
</dbReference>
<dbReference type="PANTHER" id="PTHR43593:SF1">
    <property type="entry name" value="INOSITOL 2-DEHYDROGENASE"/>
    <property type="match status" value="1"/>
</dbReference>
<dbReference type="Pfam" id="PF01408">
    <property type="entry name" value="GFO_IDH_MocA"/>
    <property type="match status" value="1"/>
</dbReference>
<dbReference type="Pfam" id="PF02894">
    <property type="entry name" value="GFO_IDH_MocA_C"/>
    <property type="match status" value="1"/>
</dbReference>
<dbReference type="SUPFAM" id="SSF55347">
    <property type="entry name" value="Glyceraldehyde-3-phosphate dehydrogenase-like, C-terminal domain"/>
    <property type="match status" value="1"/>
</dbReference>
<dbReference type="SUPFAM" id="SSF51735">
    <property type="entry name" value="NAD(P)-binding Rossmann-fold domains"/>
    <property type="match status" value="1"/>
</dbReference>
<sequence length="336" mass="36554">MALKLGVIGTGAIGQDHIRRCSKTLVGSQVVAVTDINLEQAAKVVRELDIGAEVYADGHALIAAPDVEAVLVCSWGPSHEEYVLAAIAAGKPVFCEKPLAVTAEGCRHIVEAEIASGRRLVQVGFMRPYDQGYRALKSVIDSGRIGEPLMLHCAHRNPRVGENYKTDMAITDTLIHELNVLRWLLNDDYVSVQVVFPRKTSKALAHMKDPQIVMLETARGTRIDVEVFVNCQYGYDIQCEVVGESGIAKLPEPSQVQLRSEAKLSNAILMDWKDRFIAAYDVELQDFIDGVNAGTIYGPSAWDGYAAAVAADACVQAQNSGAVVPIALEMRPAFYD</sequence>
<reference key="1">
    <citation type="journal article" date="2005" name="J. Bacteriol.">
        <title>Whole-genome sequence analysis of Pseudomonas syringae pv. phaseolicola 1448A reveals divergence among pathovars in genes involved in virulence and transposition.</title>
        <authorList>
            <person name="Joardar V."/>
            <person name="Lindeberg M."/>
            <person name="Jackson R.W."/>
            <person name="Selengut J."/>
            <person name="Dodson R."/>
            <person name="Brinkac L.M."/>
            <person name="Daugherty S.C."/>
            <person name="DeBoy R.T."/>
            <person name="Durkin A.S."/>
            <person name="Gwinn Giglio M."/>
            <person name="Madupu R."/>
            <person name="Nelson W.C."/>
            <person name="Rosovitz M.J."/>
            <person name="Sullivan S.A."/>
            <person name="Crabtree J."/>
            <person name="Creasy T."/>
            <person name="Davidsen T.M."/>
            <person name="Haft D.H."/>
            <person name="Zafar N."/>
            <person name="Zhou L."/>
            <person name="Halpin R."/>
            <person name="Holley T."/>
            <person name="Khouri H.M."/>
            <person name="Feldblyum T.V."/>
            <person name="White O."/>
            <person name="Fraser C.M."/>
            <person name="Chatterjee A.K."/>
            <person name="Cartinhour S."/>
            <person name="Schneider D."/>
            <person name="Mansfield J.W."/>
            <person name="Collmer A."/>
            <person name="Buell R."/>
        </authorList>
    </citation>
    <scope>NUCLEOTIDE SEQUENCE [LARGE SCALE GENOMIC DNA]</scope>
    <source>
        <strain>1448A / Race 6</strain>
    </source>
</reference>
<proteinExistence type="inferred from homology"/>
<evidence type="ECO:0000255" key="1">
    <source>
        <dbReference type="HAMAP-Rule" id="MF_01671"/>
    </source>
</evidence>
<evidence type="ECO:0000305" key="2"/>